<comment type="function">
    <text evidence="2">Catalyzes a Baeyer-Villiger oxidation reaction, i.e. the insertion of an oxygen atom into a carbon-carbon bond adjacent to a carbonyl, which converts ketones to esters. Is most efficient with phenylacetone as substrate, leading to the formation of benzyl acetate. Can also oxidize other aromatic ketones (benzylacetone, alpha-methylphenylacetone and 4-hydroxyacetophenone), some aliphatic ketones (dodecan-2-one and bicyclohept-2-en-6-one) and sulfides (e.g. methyl 4-tolylsulfide).</text>
</comment>
<comment type="catalytic activity">
    <reaction evidence="2">
        <text>phenylacetone + NADPH + O2 + H(+) = benzyl acetate + NADP(+) + H2O</text>
        <dbReference type="Rhea" id="RHEA:10124"/>
        <dbReference type="ChEBI" id="CHEBI:15377"/>
        <dbReference type="ChEBI" id="CHEBI:15378"/>
        <dbReference type="ChEBI" id="CHEBI:15379"/>
        <dbReference type="ChEBI" id="CHEBI:52051"/>
        <dbReference type="ChEBI" id="CHEBI:52052"/>
        <dbReference type="ChEBI" id="CHEBI:57783"/>
        <dbReference type="ChEBI" id="CHEBI:58349"/>
        <dbReference type="EC" id="1.14.13.92"/>
    </reaction>
</comment>
<comment type="cofactor">
    <cofactor evidence="2">
        <name>FAD</name>
        <dbReference type="ChEBI" id="CHEBI:57692"/>
    </cofactor>
    <text evidence="2">Binds 1 FAD per subunit.</text>
</comment>
<comment type="biophysicochemical properties">
    <kinetics>
        <KM evidence="2">3 uM for NADPH</KM>
        <KM evidence="2">59 uM for phenylacetone</KM>
        <KM evidence="2">360 uM for benzylacetone</KM>
        <KM evidence="2">830 uM for alpha-methylphenylacetone</KM>
        <KM evidence="2">2.2 mM for 4-hydroxyacetophenone</KM>
        <KM evidence="2">260 uM for 2-dodecanone</KM>
        <KM evidence="2">15 mM for bicyclohept-2-en-6-one</KM>
        <KM evidence="2">860 uM for methyl 4-tolylsulfide</KM>
    </kinetics>
    <phDependence>
        <text evidence="2">Optimum pH is 8.0.</text>
    </phDependence>
    <temperatureDependence>
        <text evidence="2">Thermostable. Displays an activity half-life of 1 day at 52 degrees Celsius.</text>
    </temperatureDependence>
</comment>
<comment type="subunit">
    <text evidence="1 2">Monomer.</text>
</comment>
<comment type="similarity">
    <text evidence="5">Belongs to the FAD-binding monooxygenase family.</text>
</comment>
<accession>Q47PU3</accession>
<evidence type="ECO:0000269" key="1">
    <source>
    </source>
</evidence>
<evidence type="ECO:0000269" key="2">
    <source>
    </source>
</evidence>
<evidence type="ECO:0000269" key="3">
    <source>
    </source>
</evidence>
<evidence type="ECO:0000269" key="4">
    <source>
    </source>
</evidence>
<evidence type="ECO:0000305" key="5"/>
<evidence type="ECO:0007829" key="6">
    <source>
        <dbReference type="PDB" id="1W4X"/>
    </source>
</evidence>
<evidence type="ECO:0007829" key="7">
    <source>
        <dbReference type="PDB" id="2YLX"/>
    </source>
</evidence>
<evidence type="ECO:0007829" key="8">
    <source>
        <dbReference type="PDB" id="4D04"/>
    </source>
</evidence>
<keyword id="KW-0002">3D-structure</keyword>
<keyword id="KW-0274">FAD</keyword>
<keyword id="KW-0285">Flavoprotein</keyword>
<keyword id="KW-0503">Monooxygenase</keyword>
<keyword id="KW-0521">NADP</keyword>
<keyword id="KW-0560">Oxidoreductase</keyword>
<dbReference type="EC" id="1.14.13.92"/>
<dbReference type="EMBL" id="CP000088">
    <property type="protein sequence ID" value="AAZ55526.1"/>
    <property type="molecule type" value="Genomic_DNA"/>
</dbReference>
<dbReference type="RefSeq" id="WP_011291921.1">
    <property type="nucleotide sequence ID" value="NC_007333.1"/>
</dbReference>
<dbReference type="PDB" id="1W4X">
    <property type="method" value="X-ray"/>
    <property type="resolution" value="1.70 A"/>
    <property type="chains" value="A=1-542"/>
</dbReference>
<dbReference type="PDB" id="2YLR">
    <property type="method" value="X-ray"/>
    <property type="resolution" value="2.26 A"/>
    <property type="chains" value="A=1-542"/>
</dbReference>
<dbReference type="PDB" id="2YLS">
    <property type="method" value="X-ray"/>
    <property type="resolution" value="2.26 A"/>
    <property type="chains" value="A=1-542"/>
</dbReference>
<dbReference type="PDB" id="2YLT">
    <property type="method" value="X-ray"/>
    <property type="resolution" value="2.65 A"/>
    <property type="chains" value="A=1-542"/>
</dbReference>
<dbReference type="PDB" id="2YLW">
    <property type="method" value="X-ray"/>
    <property type="resolution" value="2.90 A"/>
    <property type="chains" value="A=1-542"/>
</dbReference>
<dbReference type="PDB" id="2YLX">
    <property type="method" value="X-ray"/>
    <property type="resolution" value="2.20 A"/>
    <property type="chains" value="A=1-542"/>
</dbReference>
<dbReference type="PDB" id="2YLZ">
    <property type="method" value="X-ray"/>
    <property type="resolution" value="2.00 A"/>
    <property type="chains" value="A=1-542"/>
</dbReference>
<dbReference type="PDB" id="2YM1">
    <property type="method" value="X-ray"/>
    <property type="resolution" value="2.28 A"/>
    <property type="chains" value="A=1-542"/>
</dbReference>
<dbReference type="PDB" id="2YM2">
    <property type="method" value="X-ray"/>
    <property type="resolution" value="2.70 A"/>
    <property type="chains" value="A=1-542"/>
</dbReference>
<dbReference type="PDB" id="4C74">
    <property type="method" value="X-ray"/>
    <property type="resolution" value="1.97 A"/>
    <property type="chains" value="A=1-542"/>
</dbReference>
<dbReference type="PDB" id="4C77">
    <property type="method" value="X-ray"/>
    <property type="resolution" value="2.70 A"/>
    <property type="chains" value="A=1-542"/>
</dbReference>
<dbReference type="PDB" id="4D03">
    <property type="method" value="X-ray"/>
    <property type="resolution" value="1.81 A"/>
    <property type="chains" value="A=1-542"/>
</dbReference>
<dbReference type="PDB" id="4D04">
    <property type="method" value="X-ray"/>
    <property type="resolution" value="1.75 A"/>
    <property type="chains" value="A=1-542"/>
</dbReference>
<dbReference type="PDB" id="4OVI">
    <property type="method" value="X-ray"/>
    <property type="resolution" value="1.87 A"/>
    <property type="chains" value="A=1-542"/>
</dbReference>
<dbReference type="PDB" id="8XG7">
    <property type="method" value="X-ray"/>
    <property type="resolution" value="2.00 A"/>
    <property type="chains" value="A=1-542"/>
</dbReference>
<dbReference type="PDB" id="8XG8">
    <property type="method" value="X-ray"/>
    <property type="resolution" value="2.13 A"/>
    <property type="chains" value="A=1-542"/>
</dbReference>
<dbReference type="PDB" id="8XG9">
    <property type="method" value="X-ray"/>
    <property type="resolution" value="2.00 A"/>
    <property type="chains" value="A=1-542"/>
</dbReference>
<dbReference type="PDBsum" id="1W4X"/>
<dbReference type="PDBsum" id="2YLR"/>
<dbReference type="PDBsum" id="2YLS"/>
<dbReference type="PDBsum" id="2YLT"/>
<dbReference type="PDBsum" id="2YLW"/>
<dbReference type="PDBsum" id="2YLX"/>
<dbReference type="PDBsum" id="2YLZ"/>
<dbReference type="PDBsum" id="2YM1"/>
<dbReference type="PDBsum" id="2YM2"/>
<dbReference type="PDBsum" id="4C74"/>
<dbReference type="PDBsum" id="4C77"/>
<dbReference type="PDBsum" id="4D03"/>
<dbReference type="PDBsum" id="4D04"/>
<dbReference type="PDBsum" id="4OVI"/>
<dbReference type="PDBsum" id="8XG7"/>
<dbReference type="PDBsum" id="8XG8"/>
<dbReference type="PDBsum" id="8XG9"/>
<dbReference type="SMR" id="Q47PU3"/>
<dbReference type="STRING" id="269800.Tfu_1490"/>
<dbReference type="DrugBank" id="DB03147">
    <property type="generic name" value="Flavin adenine dinucleotide"/>
</dbReference>
<dbReference type="KEGG" id="tfu:Tfu_1490"/>
<dbReference type="eggNOG" id="COG2072">
    <property type="taxonomic scope" value="Bacteria"/>
</dbReference>
<dbReference type="HOGENOM" id="CLU_006937_8_1_11"/>
<dbReference type="OrthoDB" id="5168853at2"/>
<dbReference type="BRENDA" id="1.14.13.92">
    <property type="organism ID" value="6298"/>
</dbReference>
<dbReference type="EvolutionaryTrace" id="Q47PU3"/>
<dbReference type="GO" id="GO:0050660">
    <property type="term" value="F:flavin adenine dinucleotide binding"/>
    <property type="evidence" value="ECO:0007669"/>
    <property type="project" value="InterPro"/>
</dbReference>
<dbReference type="GO" id="GO:0004499">
    <property type="term" value="F:N,N-dimethylaniline monooxygenase activity"/>
    <property type="evidence" value="ECO:0007669"/>
    <property type="project" value="InterPro"/>
</dbReference>
<dbReference type="GO" id="GO:0050661">
    <property type="term" value="F:NADP binding"/>
    <property type="evidence" value="ECO:0007669"/>
    <property type="project" value="InterPro"/>
</dbReference>
<dbReference type="GO" id="GO:0033776">
    <property type="term" value="F:phenylacetone monooxygenase activity"/>
    <property type="evidence" value="ECO:0007669"/>
    <property type="project" value="UniProtKB-EC"/>
</dbReference>
<dbReference type="Gene3D" id="3.50.50.60">
    <property type="entry name" value="FAD/NAD(P)-binding domain"/>
    <property type="match status" value="2"/>
</dbReference>
<dbReference type="InterPro" id="IPR050775">
    <property type="entry name" value="FAD-binding_Monooxygenases"/>
</dbReference>
<dbReference type="InterPro" id="IPR036188">
    <property type="entry name" value="FAD/NAD-bd_sf"/>
</dbReference>
<dbReference type="InterPro" id="IPR020946">
    <property type="entry name" value="Flavin_mOase-like"/>
</dbReference>
<dbReference type="PANTHER" id="PTHR43098">
    <property type="entry name" value="L-ORNITHINE N(5)-MONOOXYGENASE-RELATED"/>
    <property type="match status" value="1"/>
</dbReference>
<dbReference type="PANTHER" id="PTHR43098:SF3">
    <property type="entry name" value="L-ORNITHINE N(5)-MONOOXYGENASE-RELATED"/>
    <property type="match status" value="1"/>
</dbReference>
<dbReference type="Pfam" id="PF00743">
    <property type="entry name" value="FMO-like"/>
    <property type="match status" value="1"/>
</dbReference>
<dbReference type="PRINTS" id="PR00411">
    <property type="entry name" value="PNDRDTASEI"/>
</dbReference>
<dbReference type="SUPFAM" id="SSF51905">
    <property type="entry name" value="FAD/NAD(P)-binding domain"/>
    <property type="match status" value="2"/>
</dbReference>
<sequence>MAGQTTVDSRRQPPEEVDVLVVGAGFSGLYALYRLRELGRSVHVIETAGDVGGVWYWNRYPGARCDIESIEYCYSFSEEVLQEWNWTERYASQPEILRYINFVADKFDLRSGITFHTTVTAAAFDEATNTWTVDTNHGDRIRARYLIMASGQLSVPQLPNFPGLKDFAGNLYHTGNWPHEPVDFSGQRVGVIGTGSSGIQVSPQIAKQAAELFVFQRTPHFAVPARNAPLDPEFLADLKKRYAEFREESRNTPGGTHRYQGPKSALEVSDEELVETLERYWQEGGPDILAAYRDILRDRDANERVAEFIRNKIRNTVRDPEVAERLVPKGYPFGTKRLILEIDYYEMFNRDNVHLVDTLSAPIETITPRGVRTSEREYELDSLVLATGFDALTGALFKIDIRGVGNVALKEKWAAGPRTYLGLSTAGFPNLFFIAGPGSPSALSNMLVSIEQHVEWVTDHIAYMFKNGLTRSEAVLEKEDEWVEHVNEIADETLYPMTASWYTGANVPGKPRVFMLYVGGFHRYRQICDEVAAKGYEGFVLT</sequence>
<protein>
    <recommendedName>
        <fullName>Phenylacetone monooxygenase</fullName>
        <shortName>PAMO</shortName>
        <ecNumber>1.14.13.92</ecNumber>
    </recommendedName>
    <alternativeName>
        <fullName>Baeyer-Villiger monooxygenase</fullName>
        <shortName>BVMO</shortName>
    </alternativeName>
</protein>
<proteinExistence type="evidence at protein level"/>
<feature type="chain" id="PRO_0000287885" description="Phenylacetone monooxygenase">
    <location>
        <begin position="1"/>
        <end position="542"/>
    </location>
</feature>
<feature type="binding site" evidence="1 3 4">
    <location>
        <position position="27"/>
    </location>
    <ligand>
        <name>FAD</name>
        <dbReference type="ChEBI" id="CHEBI:57692"/>
    </ligand>
</feature>
<feature type="binding site" evidence="1 3 4">
    <location>
        <position position="46"/>
    </location>
    <ligand>
        <name>FAD</name>
        <dbReference type="ChEBI" id="CHEBI:57692"/>
    </ligand>
</feature>
<feature type="binding site" evidence="1 3 4">
    <location>
        <begin position="54"/>
        <end position="57"/>
    </location>
    <ligand>
        <name>FAD</name>
        <dbReference type="ChEBI" id="CHEBI:57692"/>
    </ligand>
</feature>
<feature type="binding site" evidence="3">
    <location>
        <begin position="64"/>
        <end position="66"/>
    </location>
    <ligand>
        <name>NADP(+)</name>
        <dbReference type="ChEBI" id="CHEBI:58349"/>
    </ligand>
</feature>
<feature type="binding site" evidence="1 3 4">
    <location>
        <position position="66"/>
    </location>
    <ligand>
        <name>FAD</name>
        <dbReference type="ChEBI" id="CHEBI:57692"/>
    </ligand>
</feature>
<feature type="binding site" evidence="1 3 4">
    <location>
        <position position="72"/>
    </location>
    <ligand>
        <name>FAD</name>
        <dbReference type="ChEBI" id="CHEBI:57692"/>
    </ligand>
</feature>
<feature type="binding site" evidence="1 3 4">
    <location>
        <position position="119"/>
    </location>
    <ligand>
        <name>FAD</name>
        <dbReference type="ChEBI" id="CHEBI:57692"/>
    </ligand>
</feature>
<feature type="binding site" evidence="1 3 4">
    <location>
        <position position="152"/>
    </location>
    <ligand>
        <name>FAD</name>
        <dbReference type="ChEBI" id="CHEBI:57692"/>
    </ligand>
</feature>
<feature type="binding site" evidence="3">
    <location>
        <begin position="194"/>
        <end position="200"/>
    </location>
    <ligand>
        <name>NADP(+)</name>
        <dbReference type="ChEBI" id="CHEBI:58349"/>
    </ligand>
</feature>
<feature type="binding site" evidence="3">
    <location>
        <begin position="217"/>
        <end position="218"/>
    </location>
    <ligand>
        <name>NADP(+)</name>
        <dbReference type="ChEBI" id="CHEBI:58349"/>
    </ligand>
</feature>
<feature type="binding site" evidence="3">
    <location>
        <begin position="336"/>
        <end position="337"/>
    </location>
    <ligand>
        <name>NADP(+)</name>
        <dbReference type="ChEBI" id="CHEBI:58349"/>
    </ligand>
</feature>
<feature type="binding site" evidence="1 3 4">
    <location>
        <position position="446"/>
    </location>
    <ligand>
        <name>FAD</name>
        <dbReference type="ChEBI" id="CHEBI:57692"/>
    </ligand>
</feature>
<feature type="binding site" evidence="3">
    <location>
        <position position="501"/>
    </location>
    <ligand>
        <name>NADP(+)</name>
        <dbReference type="ChEBI" id="CHEBI:58349"/>
    </ligand>
</feature>
<feature type="site" description="Transition state stabilizer" evidence="1 3">
    <location>
        <position position="337"/>
    </location>
</feature>
<feature type="strand" evidence="6">
    <location>
        <begin position="15"/>
        <end position="22"/>
    </location>
</feature>
<feature type="helix" evidence="6">
    <location>
        <begin position="26"/>
        <end position="37"/>
    </location>
</feature>
<feature type="strand" evidence="6">
    <location>
        <begin position="42"/>
        <end position="45"/>
    </location>
</feature>
<feature type="strand" evidence="6">
    <location>
        <begin position="47"/>
        <end position="51"/>
    </location>
</feature>
<feature type="helix" evidence="6">
    <location>
        <begin position="54"/>
        <end position="57"/>
    </location>
</feature>
<feature type="turn" evidence="6">
    <location>
        <begin position="69"/>
        <end position="71"/>
    </location>
</feature>
<feature type="helix" evidence="6">
    <location>
        <begin position="78"/>
        <end position="83"/>
    </location>
</feature>
<feature type="strand" evidence="6">
    <location>
        <begin position="88"/>
        <end position="90"/>
    </location>
</feature>
<feature type="helix" evidence="6">
    <location>
        <begin position="93"/>
        <end position="106"/>
    </location>
</feature>
<feature type="helix" evidence="6">
    <location>
        <begin position="109"/>
        <end position="112"/>
    </location>
</feature>
<feature type="strand" evidence="6">
    <location>
        <begin position="119"/>
        <end position="125"/>
    </location>
</feature>
<feature type="turn" evidence="6">
    <location>
        <begin position="126"/>
        <end position="129"/>
    </location>
</feature>
<feature type="strand" evidence="6">
    <location>
        <begin position="130"/>
        <end position="135"/>
    </location>
</feature>
<feature type="strand" evidence="6">
    <location>
        <begin position="140"/>
        <end position="148"/>
    </location>
</feature>
<feature type="helix" evidence="6">
    <location>
        <begin position="164"/>
        <end position="166"/>
    </location>
</feature>
<feature type="strand" evidence="6">
    <location>
        <begin position="169"/>
        <end position="173"/>
    </location>
</feature>
<feature type="helix" evidence="6">
    <location>
        <begin position="174"/>
        <end position="176"/>
    </location>
</feature>
<feature type="strand" evidence="6">
    <location>
        <begin position="188"/>
        <end position="192"/>
    </location>
</feature>
<feature type="helix" evidence="6">
    <location>
        <begin position="196"/>
        <end position="208"/>
    </location>
</feature>
<feature type="strand" evidence="6">
    <location>
        <begin position="209"/>
        <end position="218"/>
    </location>
</feature>
<feature type="strand" evidence="6">
    <location>
        <begin position="222"/>
        <end position="224"/>
    </location>
</feature>
<feature type="helix" evidence="6">
    <location>
        <begin position="232"/>
        <end position="239"/>
    </location>
</feature>
<feature type="helix" evidence="6">
    <location>
        <begin position="242"/>
        <end position="250"/>
    </location>
</feature>
<feature type="strand" evidence="6">
    <location>
        <begin position="252"/>
        <end position="256"/>
    </location>
</feature>
<feature type="turn" evidence="6">
    <location>
        <begin position="265"/>
        <end position="267"/>
    </location>
</feature>
<feature type="helix" evidence="6">
    <location>
        <begin position="270"/>
        <end position="283"/>
    </location>
</feature>
<feature type="helix" evidence="6">
    <location>
        <begin position="286"/>
        <end position="290"/>
    </location>
</feature>
<feature type="turn" evidence="6">
    <location>
        <begin position="293"/>
        <end position="297"/>
    </location>
</feature>
<feature type="helix" evidence="6">
    <location>
        <begin position="299"/>
        <end position="316"/>
    </location>
</feature>
<feature type="strand" evidence="7">
    <location>
        <begin position="317"/>
        <end position="319"/>
    </location>
</feature>
<feature type="helix" evidence="6">
    <location>
        <begin position="320"/>
        <end position="326"/>
    </location>
</feature>
<feature type="strand" evidence="6">
    <location>
        <begin position="333"/>
        <end position="336"/>
    </location>
</feature>
<feature type="strand" evidence="6">
    <location>
        <begin position="339"/>
        <end position="343"/>
    </location>
</feature>
<feature type="helix" evidence="6">
    <location>
        <begin position="344"/>
        <end position="347"/>
    </location>
</feature>
<feature type="strand" evidence="6">
    <location>
        <begin position="353"/>
        <end position="357"/>
    </location>
</feature>
<feature type="turn" evidence="6">
    <location>
        <begin position="358"/>
        <end position="360"/>
    </location>
</feature>
<feature type="strand" evidence="6">
    <location>
        <begin position="363"/>
        <end position="366"/>
    </location>
</feature>
<feature type="strand" evidence="6">
    <location>
        <begin position="368"/>
        <end position="375"/>
    </location>
</feature>
<feature type="strand" evidence="6">
    <location>
        <begin position="377"/>
        <end position="379"/>
    </location>
</feature>
<feature type="strand" evidence="6">
    <location>
        <begin position="381"/>
        <end position="385"/>
    </location>
</feature>
<feature type="turn" evidence="8">
    <location>
        <begin position="391"/>
        <end position="393"/>
    </location>
</feature>
<feature type="helix" evidence="6">
    <location>
        <begin position="394"/>
        <end position="397"/>
    </location>
</feature>
<feature type="strand" evidence="6">
    <location>
        <begin position="399"/>
        <end position="402"/>
    </location>
</feature>
<feature type="helix" evidence="6">
    <location>
        <begin position="404"/>
        <end position="406"/>
    </location>
</feature>
<feature type="helix" evidence="6">
    <location>
        <begin position="409"/>
        <end position="412"/>
    </location>
</feature>
<feature type="turn" evidence="6">
    <location>
        <begin position="413"/>
        <end position="415"/>
    </location>
</feature>
<feature type="turn" evidence="6">
    <location>
        <begin position="421"/>
        <end position="423"/>
    </location>
</feature>
<feature type="strand" evidence="6">
    <location>
        <begin position="431"/>
        <end position="435"/>
    </location>
</feature>
<feature type="helix" evidence="6">
    <location>
        <begin position="441"/>
        <end position="443"/>
    </location>
</feature>
<feature type="helix" evidence="6">
    <location>
        <begin position="446"/>
        <end position="466"/>
    </location>
</feature>
<feature type="strand" evidence="6">
    <location>
        <begin position="471"/>
        <end position="474"/>
    </location>
</feature>
<feature type="helix" evidence="6">
    <location>
        <begin position="476"/>
        <end position="490"/>
    </location>
</feature>
<feature type="helix" evidence="6">
    <location>
        <begin position="495"/>
        <end position="497"/>
    </location>
</feature>
<feature type="helix" evidence="6">
    <location>
        <begin position="499"/>
        <end position="501"/>
    </location>
</feature>
<feature type="strand" evidence="6">
    <location>
        <begin position="502"/>
        <end position="504"/>
    </location>
</feature>
<feature type="helix" evidence="6">
    <location>
        <begin position="521"/>
        <end position="533"/>
    </location>
</feature>
<feature type="strand" evidence="6">
    <location>
        <begin position="539"/>
        <end position="542"/>
    </location>
</feature>
<name>PAMO_THEFY</name>
<reference key="1">
    <citation type="journal article" date="2007" name="J. Bacteriol.">
        <title>Genome sequence and analysis of the soil cellulolytic actinomycete Thermobifida fusca YX.</title>
        <authorList>
            <person name="Lykidis A."/>
            <person name="Mavromatis K."/>
            <person name="Ivanova N."/>
            <person name="Anderson I."/>
            <person name="Land M."/>
            <person name="DiBartolo G."/>
            <person name="Martinez M."/>
            <person name="Lapidus A."/>
            <person name="Lucas S."/>
            <person name="Copeland A."/>
            <person name="Richardson P."/>
            <person name="Wilson D.B."/>
            <person name="Kyrpides N."/>
        </authorList>
    </citation>
    <scope>NUCLEOTIDE SEQUENCE [LARGE SCALE GENOMIC DNA]</scope>
    <source>
        <strain>YX</strain>
    </source>
</reference>
<reference key="2">
    <citation type="journal article" date="2005" name="Appl. Microbiol. Biotechnol.">
        <title>Discovery of a thermostable Baeyer-Villiger monooxygenase by genome mining.</title>
        <authorList>
            <person name="Fraaije M.W."/>
            <person name="Wu J."/>
            <person name="Heuts D.P.H.M."/>
            <person name="van Hellemond E.W."/>
            <person name="Lutje Spelberg J.H."/>
            <person name="Janssen D.B."/>
        </authorList>
    </citation>
    <scope>FUNCTION</scope>
    <scope>CATALYTIC ACTIVITY</scope>
    <scope>SUBSTRATE SPECIFICITY</scope>
    <scope>COFACTOR</scope>
    <scope>SUBUNIT</scope>
    <scope>BIOPHYSICOCHEMICAL PROPERTIES</scope>
</reference>
<reference key="3">
    <citation type="journal article" date="2004" name="Proc. Natl. Acad. Sci. U.S.A.">
        <title>Crystal structure of a Baeyer-Villiger monooxygenase.</title>
        <authorList>
            <person name="Malito E."/>
            <person name="Alfieri A."/>
            <person name="Fraaije M.W."/>
            <person name="Mattevi A."/>
        </authorList>
    </citation>
    <scope>X-RAY CRYSTALLOGRAPHY (1.7 ANGSTROMS) IN COMPLEX WITH FAD</scope>
</reference>
<reference key="4">
    <citation type="journal article" date="2011" name="J. Biol. Chem.">
        <title>Snapshots of enzymatic Baeyer-Villiger catalysis: oxygen activation and intermediate stabilization.</title>
        <authorList>
            <person name="Orru R."/>
            <person name="Dudek H.M."/>
            <person name="Martinoli C."/>
            <person name="Torres Pazmino D.E."/>
            <person name="Royant A."/>
            <person name="Weik M."/>
            <person name="Fraaije M.W."/>
            <person name="Mattevi A."/>
        </authorList>
    </citation>
    <scope>X-RAY CRYSTALLOGRAPHY (2.00 ANGSTROMS) IN COMPLEX WITH FAD AND NADP</scope>
</reference>
<reference key="5">
    <citation type="journal article" date="2013" name="ACS Catal.">
        <title>Beyond the protein matrix: Probing cofactor variants in a Baeyer-Villiger oxygenation reaction.</title>
        <authorList>
            <person name="Martinoli C."/>
            <person name="Dudek H.M."/>
            <person name="Orru R."/>
            <person name="Edmondson D.E."/>
            <person name="Fraaije M.W."/>
            <person name="Mattevi A."/>
        </authorList>
    </citation>
    <scope>X-RAY CRYSTALLOGRAPHY (1.87 ANGSTROMS) IN COMPLEX WITH FAD</scope>
</reference>
<organism>
    <name type="scientific">Thermobifida fusca (strain YX)</name>
    <dbReference type="NCBI Taxonomy" id="269800"/>
    <lineage>
        <taxon>Bacteria</taxon>
        <taxon>Bacillati</taxon>
        <taxon>Actinomycetota</taxon>
        <taxon>Actinomycetes</taxon>
        <taxon>Streptosporangiales</taxon>
        <taxon>Nocardiopsidaceae</taxon>
        <taxon>Thermobifida</taxon>
    </lineage>
</organism>
<gene>
    <name type="primary">pamO</name>
    <name type="ordered locus">Tfu_1490</name>
</gene>